<organism>
    <name type="scientific">Arabidopsis thaliana</name>
    <name type="common">Mouse-ear cress</name>
    <dbReference type="NCBI Taxonomy" id="3702"/>
    <lineage>
        <taxon>Eukaryota</taxon>
        <taxon>Viridiplantae</taxon>
        <taxon>Streptophyta</taxon>
        <taxon>Embryophyta</taxon>
        <taxon>Tracheophyta</taxon>
        <taxon>Spermatophyta</taxon>
        <taxon>Magnoliopsida</taxon>
        <taxon>eudicotyledons</taxon>
        <taxon>Gunneridae</taxon>
        <taxon>Pentapetalae</taxon>
        <taxon>rosids</taxon>
        <taxon>malvids</taxon>
        <taxon>Brassicales</taxon>
        <taxon>Brassicaceae</taxon>
        <taxon>Camelineae</taxon>
        <taxon>Arabidopsis</taxon>
    </lineage>
</organism>
<sequence length="448" mass="49794">MTYTANDEENKGRSTDNNNHRQMDYNDWLPVTASREAKWYYSAFHNVTAMVGAGVLGLPFAMSQLGWGPGLVAIIMSWAITFYSLWQMVQLHEAVPGKRLDRYPELGQEAFGPKLGYWIVMPQQLLVQIASDIVYNVTGGKSLKKFVELLFPNLEHIRQTYYILGFAALQLVLSQSPDFNSIKIVSLLAALMSFLYSMIASVASIAKGTEHRPSTYGVRGDTVASMVFDAFNGIGTIAFAFAGHSVVLEIQATIPSTPEVPSKKPMWKGVVVAYIIVIICYLFVAISGYWAFGAHVEDDVLISLERPAWLIAAANFMVFIHVIGSYQVFAMIVFDTIESYLVKTLKFTPSTTLRLVARSTYVALICLVAVCIPFFGGLLGFFGGLVFSSTSYFLPCIIWLIMKRPKRFSAHWWCSWVAIVTGISIAILAPIGGMRHIILSARTYKLFS</sequence>
<keyword id="KW-0029">Amino-acid transport</keyword>
<keyword id="KW-1003">Cell membrane</keyword>
<keyword id="KW-0472">Membrane</keyword>
<keyword id="KW-1185">Reference proteome</keyword>
<keyword id="KW-0812">Transmembrane</keyword>
<keyword id="KW-1133">Transmembrane helix</keyword>
<keyword id="KW-0813">Transport</keyword>
<reference key="1">
    <citation type="journal article" date="2000" name="Nature">
        <title>Sequence and analysis of chromosome 1 of the plant Arabidopsis thaliana.</title>
        <authorList>
            <person name="Theologis A."/>
            <person name="Ecker J.R."/>
            <person name="Palm C.J."/>
            <person name="Federspiel N.A."/>
            <person name="Kaul S."/>
            <person name="White O."/>
            <person name="Alonso J."/>
            <person name="Altafi H."/>
            <person name="Araujo R."/>
            <person name="Bowman C.L."/>
            <person name="Brooks S.Y."/>
            <person name="Buehler E."/>
            <person name="Chan A."/>
            <person name="Chao Q."/>
            <person name="Chen H."/>
            <person name="Cheuk R.F."/>
            <person name="Chin C.W."/>
            <person name="Chung M.K."/>
            <person name="Conn L."/>
            <person name="Conway A.B."/>
            <person name="Conway A.R."/>
            <person name="Creasy T.H."/>
            <person name="Dewar K."/>
            <person name="Dunn P."/>
            <person name="Etgu P."/>
            <person name="Feldblyum T.V."/>
            <person name="Feng J.-D."/>
            <person name="Fong B."/>
            <person name="Fujii C.Y."/>
            <person name="Gill J.E."/>
            <person name="Goldsmith A.D."/>
            <person name="Haas B."/>
            <person name="Hansen N.F."/>
            <person name="Hughes B."/>
            <person name="Huizar L."/>
            <person name="Hunter J.L."/>
            <person name="Jenkins J."/>
            <person name="Johnson-Hopson C."/>
            <person name="Khan S."/>
            <person name="Khaykin E."/>
            <person name="Kim C.J."/>
            <person name="Koo H.L."/>
            <person name="Kremenetskaia I."/>
            <person name="Kurtz D.B."/>
            <person name="Kwan A."/>
            <person name="Lam B."/>
            <person name="Langin-Hooper S."/>
            <person name="Lee A."/>
            <person name="Lee J.M."/>
            <person name="Lenz C.A."/>
            <person name="Li J.H."/>
            <person name="Li Y.-P."/>
            <person name="Lin X."/>
            <person name="Liu S.X."/>
            <person name="Liu Z.A."/>
            <person name="Luros J.S."/>
            <person name="Maiti R."/>
            <person name="Marziali A."/>
            <person name="Militscher J."/>
            <person name="Miranda M."/>
            <person name="Nguyen M."/>
            <person name="Nierman W.C."/>
            <person name="Osborne B.I."/>
            <person name="Pai G."/>
            <person name="Peterson J."/>
            <person name="Pham P.K."/>
            <person name="Rizzo M."/>
            <person name="Rooney T."/>
            <person name="Rowley D."/>
            <person name="Sakano H."/>
            <person name="Salzberg S.L."/>
            <person name="Schwartz J.R."/>
            <person name="Shinn P."/>
            <person name="Southwick A.M."/>
            <person name="Sun H."/>
            <person name="Tallon L.J."/>
            <person name="Tambunga G."/>
            <person name="Toriumi M.J."/>
            <person name="Town C.D."/>
            <person name="Utterback T."/>
            <person name="Van Aken S."/>
            <person name="Vaysberg M."/>
            <person name="Vysotskaia V.S."/>
            <person name="Walker M."/>
            <person name="Wu D."/>
            <person name="Yu G."/>
            <person name="Fraser C.M."/>
            <person name="Venter J.C."/>
            <person name="Davis R.W."/>
        </authorList>
    </citation>
    <scope>NUCLEOTIDE SEQUENCE [LARGE SCALE GENOMIC DNA]</scope>
    <source>
        <strain>cv. Columbia</strain>
    </source>
</reference>
<reference key="2">
    <citation type="journal article" date="2017" name="Plant J.">
        <title>Araport11: a complete reannotation of the Arabidopsis thaliana reference genome.</title>
        <authorList>
            <person name="Cheng C.Y."/>
            <person name="Krishnakumar V."/>
            <person name="Chan A.P."/>
            <person name="Thibaud-Nissen F."/>
            <person name="Schobel S."/>
            <person name="Town C.D."/>
        </authorList>
    </citation>
    <scope>GENOME REANNOTATION</scope>
    <source>
        <strain>cv. Columbia</strain>
    </source>
</reference>
<reference key="3">
    <citation type="journal article" date="2004" name="Plant J.">
        <title>Selective expression of a novel high-affinity transport system for acidic and neutral amino acids in the tapetum cells of Arabidopsis flowers.</title>
        <authorList>
            <person name="Lee Y.-H."/>
            <person name="Tegeder M."/>
        </authorList>
    </citation>
    <scope>GENE FAMILY</scope>
    <source>
        <strain>cv. C24</strain>
    </source>
</reference>
<comment type="function">
    <text evidence="1">Amino acid transporter.</text>
</comment>
<comment type="subcellular location">
    <subcellularLocation>
        <location evidence="3">Cell membrane</location>
        <topology evidence="3">Multi-pass membrane protein</topology>
    </subcellularLocation>
</comment>
<comment type="similarity">
    <text evidence="3">Belongs to the amino acid/polyamine transporter 2 family. Amino acid/auxin permease (AAAP) (TC 2.A.18.2) subfamily.</text>
</comment>
<comment type="sequence caution" evidence="3">
    <conflict type="erroneous gene model prediction">
        <sequence resource="EMBL-CDS" id="AAF43217"/>
    </conflict>
</comment>
<comment type="sequence caution" evidence="3">
    <conflict type="erroneous gene model prediction">
        <sequence resource="EMBL-CDS" id="AAG51818"/>
    </conflict>
</comment>
<feature type="chain" id="PRO_0000387975" description="Lysine histidine transporter-like 5">
    <location>
        <begin position="1"/>
        <end position="448"/>
    </location>
</feature>
<feature type="topological domain" description="Cytoplasmic" evidence="2">
    <location>
        <begin position="1"/>
        <end position="41"/>
    </location>
</feature>
<feature type="transmembrane region" description="Helical" evidence="2">
    <location>
        <begin position="42"/>
        <end position="62"/>
    </location>
</feature>
<feature type="topological domain" description="Extracellular" evidence="2">
    <location>
        <begin position="63"/>
        <end position="64"/>
    </location>
</feature>
<feature type="transmembrane region" description="Helical" evidence="2">
    <location>
        <begin position="65"/>
        <end position="85"/>
    </location>
</feature>
<feature type="topological domain" description="Cytoplasmic" evidence="2">
    <location>
        <begin position="86"/>
        <end position="114"/>
    </location>
</feature>
<feature type="transmembrane region" description="Helical" evidence="2">
    <location>
        <begin position="115"/>
        <end position="135"/>
    </location>
</feature>
<feature type="topological domain" description="Extracellular" evidence="2">
    <location>
        <begin position="136"/>
        <end position="155"/>
    </location>
</feature>
<feature type="transmembrane region" description="Helical" evidence="2">
    <location>
        <begin position="156"/>
        <end position="173"/>
    </location>
</feature>
<feature type="topological domain" description="Cytoplasmic" evidence="2">
    <location>
        <begin position="174"/>
        <end position="183"/>
    </location>
</feature>
<feature type="transmembrane region" description="Helical" evidence="2">
    <location>
        <begin position="184"/>
        <end position="204"/>
    </location>
</feature>
<feature type="topological domain" description="Extracellular" evidence="2">
    <location>
        <begin position="205"/>
        <end position="222"/>
    </location>
</feature>
<feature type="transmembrane region" description="Helical" evidence="2">
    <location>
        <begin position="223"/>
        <end position="243"/>
    </location>
</feature>
<feature type="topological domain" description="Cytoplasmic" evidence="2">
    <location>
        <begin position="244"/>
        <end position="269"/>
    </location>
</feature>
<feature type="transmembrane region" description="Helical" evidence="2">
    <location>
        <begin position="270"/>
        <end position="290"/>
    </location>
</feature>
<feature type="topological domain" description="Extracellular" evidence="2">
    <location>
        <begin position="291"/>
        <end position="313"/>
    </location>
</feature>
<feature type="transmembrane region" description="Helical" evidence="2">
    <location>
        <begin position="314"/>
        <end position="334"/>
    </location>
</feature>
<feature type="topological domain" description="Cytoplasmic" evidence="2">
    <location>
        <begin position="335"/>
        <end position="361"/>
    </location>
</feature>
<feature type="transmembrane region" description="Helical" evidence="2">
    <location>
        <begin position="362"/>
        <end position="382"/>
    </location>
</feature>
<feature type="transmembrane region" description="Helical" evidence="2">
    <location>
        <begin position="383"/>
        <end position="403"/>
    </location>
</feature>
<feature type="topological domain" description="Cytoplasmic" evidence="2">
    <location>
        <begin position="404"/>
        <end position="411"/>
    </location>
</feature>
<feature type="transmembrane region" description="Helical" evidence="2">
    <location>
        <begin position="412"/>
        <end position="432"/>
    </location>
</feature>
<feature type="topological domain" description="Extracellular" evidence="2">
    <location>
        <begin position="433"/>
        <end position="448"/>
    </location>
</feature>
<proteinExistence type="evidence at transcript level"/>
<dbReference type="EMBL" id="AC012654">
    <property type="protein sequence ID" value="AAF43217.1"/>
    <property type="status" value="ALT_SEQ"/>
    <property type="molecule type" value="Genomic_DNA"/>
</dbReference>
<dbReference type="EMBL" id="AC016163">
    <property type="protein sequence ID" value="AAG51818.1"/>
    <property type="status" value="ALT_SEQ"/>
    <property type="molecule type" value="Genomic_DNA"/>
</dbReference>
<dbReference type="EMBL" id="CP002684">
    <property type="protein sequence ID" value="AEE35212.1"/>
    <property type="molecule type" value="Genomic_DNA"/>
</dbReference>
<dbReference type="PIR" id="E96738">
    <property type="entry name" value="E96738"/>
</dbReference>
<dbReference type="RefSeq" id="NP_565019.2">
    <property type="nucleotide sequence ID" value="NM_105822.3"/>
</dbReference>
<dbReference type="SMR" id="Q9C9J0"/>
<dbReference type="FunCoup" id="Q9C9J0">
    <property type="interactions" value="1"/>
</dbReference>
<dbReference type="STRING" id="3702.Q9C9J0"/>
<dbReference type="iPTMnet" id="Q9C9J0"/>
<dbReference type="PaxDb" id="3702-AT1G71680.1"/>
<dbReference type="ProteomicsDB" id="238658"/>
<dbReference type="EnsemblPlants" id="AT1G71680.1">
    <property type="protein sequence ID" value="AT1G71680.1"/>
    <property type="gene ID" value="AT1G71680"/>
</dbReference>
<dbReference type="GeneID" id="843494"/>
<dbReference type="Gramene" id="AT1G71680.1">
    <property type="protein sequence ID" value="AT1G71680.1"/>
    <property type="gene ID" value="AT1G71680"/>
</dbReference>
<dbReference type="KEGG" id="ath:AT1G71680"/>
<dbReference type="Araport" id="AT1G71680"/>
<dbReference type="TAIR" id="AT1G71680"/>
<dbReference type="eggNOG" id="KOG1303">
    <property type="taxonomic scope" value="Eukaryota"/>
</dbReference>
<dbReference type="HOGENOM" id="CLU_031160_0_0_1"/>
<dbReference type="InParanoid" id="Q9C9J0"/>
<dbReference type="OMA" id="HWIASWV"/>
<dbReference type="PhylomeDB" id="Q9C9J0"/>
<dbReference type="PRO" id="PR:Q9C9J0"/>
<dbReference type="Proteomes" id="UP000006548">
    <property type="component" value="Chromosome 1"/>
</dbReference>
<dbReference type="ExpressionAtlas" id="Q9C9J0">
    <property type="expression patterns" value="baseline and differential"/>
</dbReference>
<dbReference type="GO" id="GO:0005886">
    <property type="term" value="C:plasma membrane"/>
    <property type="evidence" value="ECO:0007669"/>
    <property type="project" value="UniProtKB-SubCell"/>
</dbReference>
<dbReference type="GO" id="GO:0006865">
    <property type="term" value="P:amino acid transport"/>
    <property type="evidence" value="ECO:0007669"/>
    <property type="project" value="UniProtKB-KW"/>
</dbReference>
<dbReference type="InterPro" id="IPR013057">
    <property type="entry name" value="AA_transpt_TM"/>
</dbReference>
<dbReference type="PANTHER" id="PTHR48017">
    <property type="entry name" value="OS05G0424000 PROTEIN-RELATED"/>
    <property type="match status" value="1"/>
</dbReference>
<dbReference type="Pfam" id="PF01490">
    <property type="entry name" value="Aa_trans"/>
    <property type="match status" value="1"/>
</dbReference>
<protein>
    <recommendedName>
        <fullName>Lysine histidine transporter-like 5</fullName>
    </recommendedName>
</protein>
<evidence type="ECO:0000250" key="1"/>
<evidence type="ECO:0000255" key="2"/>
<evidence type="ECO:0000305" key="3"/>
<accession>Q9C9J0</accession>
<accession>Q9M9H9</accession>
<name>LHTL5_ARATH</name>
<gene>
    <name type="ordered locus">At1g71680</name>
    <name type="ORF">F14O23.2</name>
    <name type="ORF">F26A9.9</name>
</gene>